<keyword id="KW-1185">Reference proteome</keyword>
<keyword id="KW-0677">Repeat</keyword>
<keyword id="KW-0808">Transferase</keyword>
<organism>
    <name type="scientific">Mycobacterium bovis (strain ATCC BAA-935 / AF2122/97)</name>
    <dbReference type="NCBI Taxonomy" id="233413"/>
    <lineage>
        <taxon>Bacteria</taxon>
        <taxon>Bacillati</taxon>
        <taxon>Actinomycetota</taxon>
        <taxon>Actinomycetes</taxon>
        <taxon>Mycobacteriales</taxon>
        <taxon>Mycobacteriaceae</taxon>
        <taxon>Mycobacterium</taxon>
        <taxon>Mycobacterium tuberculosis complex</taxon>
    </lineage>
</organism>
<name>THT2_MYCBO</name>
<comment type="catalytic activity">
    <reaction>
        <text>thiosulfate + hydrogen cyanide = thiocyanate + sulfite + 2 H(+)</text>
        <dbReference type="Rhea" id="RHEA:16881"/>
        <dbReference type="ChEBI" id="CHEBI:15378"/>
        <dbReference type="ChEBI" id="CHEBI:17359"/>
        <dbReference type="ChEBI" id="CHEBI:18022"/>
        <dbReference type="ChEBI" id="CHEBI:18407"/>
        <dbReference type="ChEBI" id="CHEBI:33542"/>
        <dbReference type="EC" id="2.8.1.1"/>
    </reaction>
</comment>
<comment type="domain">
    <text evidence="1">Contains two rhodanese domains with different primary structures but with near identical secondary structure conformations suggesting a common evolutionary origin. Only the C-terminal rhodanese domain contains the catalytic cysteine residue (By similarity).</text>
</comment>
<feature type="chain" id="PRO_0000139416" description="Putative thiosulfate sulfurtransferase SseA">
    <location>
        <begin position="1"/>
        <end position="297"/>
    </location>
</feature>
<feature type="domain" description="Rhodanese 1" evidence="2">
    <location>
        <begin position="31"/>
        <end position="138"/>
    </location>
</feature>
<feature type="domain" description="Rhodanese 2" evidence="2">
    <location>
        <begin position="168"/>
        <end position="286"/>
    </location>
</feature>
<feature type="active site" description="Cysteine persulfide intermediate" evidence="2">
    <location>
        <position position="245"/>
    </location>
</feature>
<feature type="binding site" evidence="1">
    <location>
        <position position="250"/>
    </location>
    <ligand>
        <name>substrate</name>
    </ligand>
</feature>
<proteinExistence type="inferred from homology"/>
<reference key="1">
    <citation type="journal article" date="2003" name="Proc. Natl. Acad. Sci. U.S.A.">
        <title>The complete genome sequence of Mycobacterium bovis.</title>
        <authorList>
            <person name="Garnier T."/>
            <person name="Eiglmeier K."/>
            <person name="Camus J.-C."/>
            <person name="Medina N."/>
            <person name="Mansoor H."/>
            <person name="Pryor M."/>
            <person name="Duthoy S."/>
            <person name="Grondin S."/>
            <person name="Lacroix C."/>
            <person name="Monsempe C."/>
            <person name="Simon S."/>
            <person name="Harris B."/>
            <person name="Atkin R."/>
            <person name="Doggett J."/>
            <person name="Mayes R."/>
            <person name="Keating L."/>
            <person name="Wheeler P.R."/>
            <person name="Parkhill J."/>
            <person name="Barrell B.G."/>
            <person name="Cole S.T."/>
            <person name="Gordon S.V."/>
            <person name="Hewinson R.G."/>
        </authorList>
    </citation>
    <scope>NUCLEOTIDE SEQUENCE [LARGE SCALE GENOMIC DNA]</scope>
    <source>
        <strain>ATCC BAA-935 / AF2122/97</strain>
    </source>
</reference>
<reference key="2">
    <citation type="journal article" date="2017" name="Genome Announc.">
        <title>Updated reference genome sequence and annotation of Mycobacterium bovis AF2122/97.</title>
        <authorList>
            <person name="Malone K.M."/>
            <person name="Farrell D."/>
            <person name="Stuber T.P."/>
            <person name="Schubert O.T."/>
            <person name="Aebersold R."/>
            <person name="Robbe-Austerman S."/>
            <person name="Gordon S.V."/>
        </authorList>
    </citation>
    <scope>NUCLEOTIDE SEQUENCE [LARGE SCALE GENOMIC DNA]</scope>
    <scope>GENOME REANNOTATION</scope>
    <source>
        <strain>ATCC BAA-935 / AF2122/97</strain>
    </source>
</reference>
<sequence>MPLPADPSPTLSAYAHPERLVTADWLSAHMGAPGLAIVESDEDVLLYDVGHIPGAVKIDWHTDLNDPRVRDYINGEQFAELMDRKGIARDDTVVIYGDKSNWWAAYALWVFTLFGHADVRLLNGGRDLWLAERRETTLDVPTKTCTGYPVVQRNDAPIRAFRDDVLAILDAQPLIDVRSPEEYTGKRTHMPDYPEEGALRAGHIPTAVHIPWGKAADESGRFRSREELERLYDFINPDDQTVVYCRIGERSSHTWFVLTHLLGKADVRNYDGSWTEWGNAVRVPIVAGEEPGVVPVV</sequence>
<gene>
    <name type="primary">sseA</name>
    <name type="ordered locus">BQ2027_MB3311</name>
</gene>
<evidence type="ECO:0000250" key="1"/>
<evidence type="ECO:0000255" key="2">
    <source>
        <dbReference type="PROSITE-ProRule" id="PRU00173"/>
    </source>
</evidence>
<accession>Q7TWT6</accession>
<accession>A0A1R3Y3P8</accession>
<accession>X2BN61</accession>
<dbReference type="EC" id="2.8.1.1"/>
<dbReference type="EMBL" id="LT708304">
    <property type="protein sequence ID" value="SIU01940.1"/>
    <property type="molecule type" value="Genomic_DNA"/>
</dbReference>
<dbReference type="RefSeq" id="NP_856956.1">
    <property type="nucleotide sequence ID" value="NC_002945.3"/>
</dbReference>
<dbReference type="RefSeq" id="WP_010950863.1">
    <property type="nucleotide sequence ID" value="NC_002945.4"/>
</dbReference>
<dbReference type="SMR" id="Q7TWT6"/>
<dbReference type="KEGG" id="mbo:BQ2027_MB3311"/>
<dbReference type="PATRIC" id="fig|233413.5.peg.3640"/>
<dbReference type="Proteomes" id="UP000001419">
    <property type="component" value="Chromosome"/>
</dbReference>
<dbReference type="GO" id="GO:0004792">
    <property type="term" value="F:thiosulfate-cyanide sulfurtransferase activity"/>
    <property type="evidence" value="ECO:0007669"/>
    <property type="project" value="UniProtKB-EC"/>
</dbReference>
<dbReference type="CDD" id="cd01448">
    <property type="entry name" value="TST_Repeat_1"/>
    <property type="match status" value="1"/>
</dbReference>
<dbReference type="CDD" id="cd01449">
    <property type="entry name" value="TST_Repeat_2"/>
    <property type="match status" value="1"/>
</dbReference>
<dbReference type="FunFam" id="3.40.250.10:FF:000024">
    <property type="entry name" value="Sulfurtransferase"/>
    <property type="match status" value="1"/>
</dbReference>
<dbReference type="FunFam" id="3.40.250.10:FF:000028">
    <property type="entry name" value="Sulfurtransferase"/>
    <property type="match status" value="1"/>
</dbReference>
<dbReference type="Gene3D" id="3.40.250.10">
    <property type="entry name" value="Rhodanese-like domain"/>
    <property type="match status" value="2"/>
</dbReference>
<dbReference type="InterPro" id="IPR001763">
    <property type="entry name" value="Rhodanese-like_dom"/>
</dbReference>
<dbReference type="InterPro" id="IPR036873">
    <property type="entry name" value="Rhodanese-like_dom_sf"/>
</dbReference>
<dbReference type="InterPro" id="IPR051126">
    <property type="entry name" value="Thiosulfate_sulfurtransferase"/>
</dbReference>
<dbReference type="InterPro" id="IPR001307">
    <property type="entry name" value="Thiosulphate_STrfase_CS"/>
</dbReference>
<dbReference type="PANTHER" id="PTHR43855">
    <property type="entry name" value="THIOSULFATE SULFURTRANSFERASE"/>
    <property type="match status" value="1"/>
</dbReference>
<dbReference type="PANTHER" id="PTHR43855:SF1">
    <property type="entry name" value="THIOSULFATE SULFURTRANSFERASE"/>
    <property type="match status" value="1"/>
</dbReference>
<dbReference type="Pfam" id="PF00581">
    <property type="entry name" value="Rhodanese"/>
    <property type="match status" value="2"/>
</dbReference>
<dbReference type="SMART" id="SM00450">
    <property type="entry name" value="RHOD"/>
    <property type="match status" value="2"/>
</dbReference>
<dbReference type="SUPFAM" id="SSF52821">
    <property type="entry name" value="Rhodanese/Cell cycle control phosphatase"/>
    <property type="match status" value="2"/>
</dbReference>
<dbReference type="PROSITE" id="PS00380">
    <property type="entry name" value="RHODANESE_1"/>
    <property type="match status" value="1"/>
</dbReference>
<dbReference type="PROSITE" id="PS00683">
    <property type="entry name" value="RHODANESE_2"/>
    <property type="match status" value="1"/>
</dbReference>
<dbReference type="PROSITE" id="PS50206">
    <property type="entry name" value="RHODANESE_3"/>
    <property type="match status" value="2"/>
</dbReference>
<protein>
    <recommendedName>
        <fullName>Putative thiosulfate sulfurtransferase SseA</fullName>
        <ecNumber>2.8.1.1</ecNumber>
    </recommendedName>
</protein>